<proteinExistence type="inferred from homology"/>
<feature type="chain" id="PRO_0000113629" description="Serine hydroxymethyltransferase">
    <location>
        <begin position="1"/>
        <end position="420"/>
    </location>
</feature>
<feature type="binding site" evidence="1">
    <location>
        <position position="121"/>
    </location>
    <ligand>
        <name>(6S)-5,6,7,8-tetrahydrofolate</name>
        <dbReference type="ChEBI" id="CHEBI:57453"/>
    </ligand>
</feature>
<feature type="binding site" evidence="1">
    <location>
        <begin position="125"/>
        <end position="127"/>
    </location>
    <ligand>
        <name>(6S)-5,6,7,8-tetrahydrofolate</name>
        <dbReference type="ChEBI" id="CHEBI:57453"/>
    </ligand>
</feature>
<feature type="site" description="Plays an important role in substrate specificity" evidence="1">
    <location>
        <position position="228"/>
    </location>
</feature>
<feature type="modified residue" description="N6-(pyridoxal phosphate)lysine" evidence="1">
    <location>
        <position position="229"/>
    </location>
</feature>
<sequence>MLKRSMNIADYDPVLWQAIQDENRRQEEHIELIASENYASPRVMEAQGSQFTNKYAEGYPGKRYYGGCEYADIVEQLAIDRAKELFHADYVNVQPHSGSQANAAVYGALLQPHDTILGMSLAHGGHLTHGASVSFSGKIYNAVQYGITAEGLIDYEDVRQKALECKPKMIVAGFSAYSQVVDWAKMREIADEVGAYLFVDMAHVAGLIAAGVYPSPLPHAHVVTTTTHKTLGGPRGGLILSAAKDEDLYKKLQSSVFPANQGGPLVHVIAAKAVCFKEALEPEYKVYQQQVVKNAKAMVDVFKQRGYNVVSNGTENHLFLVDLVSHGLTGKAADAALGSANITVNKNAVPNDPQKPFVTSGIRVGTPSITRRGFKEAESAELAGWMCDVLDAMGKDNEAQVIAQTKEKVLAICKRLPVYA</sequence>
<comment type="function">
    <text evidence="1">Catalyzes the reversible interconversion of serine and glycine with tetrahydrofolate (THF) serving as the one-carbon carrier. This reaction serves as the major source of one-carbon groups required for the biosynthesis of purines, thymidylate, methionine, and other important biomolecules. Also exhibits THF-independent aldolase activity toward beta-hydroxyamino acids, producing glycine and aldehydes, via a retro-aldol mechanism.</text>
</comment>
<comment type="catalytic activity">
    <reaction evidence="1">
        <text>(6R)-5,10-methylene-5,6,7,8-tetrahydrofolate + glycine + H2O = (6S)-5,6,7,8-tetrahydrofolate + L-serine</text>
        <dbReference type="Rhea" id="RHEA:15481"/>
        <dbReference type="ChEBI" id="CHEBI:15377"/>
        <dbReference type="ChEBI" id="CHEBI:15636"/>
        <dbReference type="ChEBI" id="CHEBI:33384"/>
        <dbReference type="ChEBI" id="CHEBI:57305"/>
        <dbReference type="ChEBI" id="CHEBI:57453"/>
        <dbReference type="EC" id="2.1.2.1"/>
    </reaction>
</comment>
<comment type="cofactor">
    <cofactor evidence="1">
        <name>pyridoxal 5'-phosphate</name>
        <dbReference type="ChEBI" id="CHEBI:597326"/>
    </cofactor>
</comment>
<comment type="pathway">
    <text evidence="1">One-carbon metabolism; tetrahydrofolate interconversion.</text>
</comment>
<comment type="pathway">
    <text evidence="1">Amino-acid biosynthesis; glycine biosynthesis; glycine from L-serine: step 1/1.</text>
</comment>
<comment type="subunit">
    <text evidence="1">Homodimer.</text>
</comment>
<comment type="subcellular location">
    <subcellularLocation>
        <location evidence="1">Cytoplasm</location>
    </subcellularLocation>
</comment>
<comment type="similarity">
    <text evidence="1">Belongs to the SHMT family.</text>
</comment>
<organism>
    <name type="scientific">Pasteurella multocida (strain Pm70)</name>
    <dbReference type="NCBI Taxonomy" id="272843"/>
    <lineage>
        <taxon>Bacteria</taxon>
        <taxon>Pseudomonadati</taxon>
        <taxon>Pseudomonadota</taxon>
        <taxon>Gammaproteobacteria</taxon>
        <taxon>Pasteurellales</taxon>
        <taxon>Pasteurellaceae</taxon>
        <taxon>Pasteurella</taxon>
    </lineage>
</organism>
<gene>
    <name evidence="1" type="primary">glyA</name>
    <name type="ordered locus">PM0225</name>
</gene>
<keyword id="KW-0028">Amino-acid biosynthesis</keyword>
<keyword id="KW-0963">Cytoplasm</keyword>
<keyword id="KW-0554">One-carbon metabolism</keyword>
<keyword id="KW-0663">Pyridoxal phosphate</keyword>
<keyword id="KW-1185">Reference proteome</keyword>
<keyword id="KW-0808">Transferase</keyword>
<protein>
    <recommendedName>
        <fullName evidence="1">Serine hydroxymethyltransferase</fullName>
        <shortName evidence="1">SHMT</shortName>
        <shortName evidence="1">Serine methylase</shortName>
        <ecNumber evidence="1">2.1.2.1</ecNumber>
    </recommendedName>
</protein>
<accession>P57830</accession>
<reference key="1">
    <citation type="journal article" date="2001" name="Proc. Natl. Acad. Sci. U.S.A.">
        <title>Complete genomic sequence of Pasteurella multocida Pm70.</title>
        <authorList>
            <person name="May B.J."/>
            <person name="Zhang Q."/>
            <person name="Li L.L."/>
            <person name="Paustian M.L."/>
            <person name="Whittam T.S."/>
            <person name="Kapur V."/>
        </authorList>
    </citation>
    <scope>NUCLEOTIDE SEQUENCE [LARGE SCALE GENOMIC DNA]</scope>
    <source>
        <strain>Pm70</strain>
    </source>
</reference>
<name>GLYA_PASMU</name>
<evidence type="ECO:0000255" key="1">
    <source>
        <dbReference type="HAMAP-Rule" id="MF_00051"/>
    </source>
</evidence>
<dbReference type="EC" id="2.1.2.1" evidence="1"/>
<dbReference type="EMBL" id="AE004439">
    <property type="protein sequence ID" value="AAK02309.1"/>
    <property type="molecule type" value="Genomic_DNA"/>
</dbReference>
<dbReference type="RefSeq" id="WP_005723619.1">
    <property type="nucleotide sequence ID" value="NC_002663.1"/>
</dbReference>
<dbReference type="SMR" id="P57830"/>
<dbReference type="STRING" id="272843.PM0225"/>
<dbReference type="EnsemblBacteria" id="AAK02309">
    <property type="protein sequence ID" value="AAK02309"/>
    <property type="gene ID" value="PM0225"/>
</dbReference>
<dbReference type="GeneID" id="77207575"/>
<dbReference type="KEGG" id="pmu:PM0225"/>
<dbReference type="PATRIC" id="fig|272843.6.peg.233"/>
<dbReference type="HOGENOM" id="CLU_022477_2_1_6"/>
<dbReference type="OrthoDB" id="9803846at2"/>
<dbReference type="UniPathway" id="UPA00193"/>
<dbReference type="UniPathway" id="UPA00288">
    <property type="reaction ID" value="UER01023"/>
</dbReference>
<dbReference type="Proteomes" id="UP000000809">
    <property type="component" value="Chromosome"/>
</dbReference>
<dbReference type="GO" id="GO:0005829">
    <property type="term" value="C:cytosol"/>
    <property type="evidence" value="ECO:0007669"/>
    <property type="project" value="TreeGrafter"/>
</dbReference>
<dbReference type="GO" id="GO:0004372">
    <property type="term" value="F:glycine hydroxymethyltransferase activity"/>
    <property type="evidence" value="ECO:0007669"/>
    <property type="project" value="UniProtKB-UniRule"/>
</dbReference>
<dbReference type="GO" id="GO:0030170">
    <property type="term" value="F:pyridoxal phosphate binding"/>
    <property type="evidence" value="ECO:0007669"/>
    <property type="project" value="UniProtKB-UniRule"/>
</dbReference>
<dbReference type="GO" id="GO:0019264">
    <property type="term" value="P:glycine biosynthetic process from serine"/>
    <property type="evidence" value="ECO:0007669"/>
    <property type="project" value="UniProtKB-UniRule"/>
</dbReference>
<dbReference type="GO" id="GO:0035999">
    <property type="term" value="P:tetrahydrofolate interconversion"/>
    <property type="evidence" value="ECO:0007669"/>
    <property type="project" value="UniProtKB-UniRule"/>
</dbReference>
<dbReference type="CDD" id="cd00378">
    <property type="entry name" value="SHMT"/>
    <property type="match status" value="1"/>
</dbReference>
<dbReference type="FunFam" id="3.40.640.10:FF:000001">
    <property type="entry name" value="Serine hydroxymethyltransferase"/>
    <property type="match status" value="1"/>
</dbReference>
<dbReference type="FunFam" id="3.90.1150.10:FF:000003">
    <property type="entry name" value="Serine hydroxymethyltransferase"/>
    <property type="match status" value="1"/>
</dbReference>
<dbReference type="Gene3D" id="3.90.1150.10">
    <property type="entry name" value="Aspartate Aminotransferase, domain 1"/>
    <property type="match status" value="1"/>
</dbReference>
<dbReference type="Gene3D" id="3.40.640.10">
    <property type="entry name" value="Type I PLP-dependent aspartate aminotransferase-like (Major domain)"/>
    <property type="match status" value="1"/>
</dbReference>
<dbReference type="HAMAP" id="MF_00051">
    <property type="entry name" value="SHMT"/>
    <property type="match status" value="1"/>
</dbReference>
<dbReference type="InterPro" id="IPR015424">
    <property type="entry name" value="PyrdxlP-dep_Trfase"/>
</dbReference>
<dbReference type="InterPro" id="IPR015421">
    <property type="entry name" value="PyrdxlP-dep_Trfase_major"/>
</dbReference>
<dbReference type="InterPro" id="IPR015422">
    <property type="entry name" value="PyrdxlP-dep_Trfase_small"/>
</dbReference>
<dbReference type="InterPro" id="IPR001085">
    <property type="entry name" value="Ser_HO-MeTrfase"/>
</dbReference>
<dbReference type="InterPro" id="IPR049943">
    <property type="entry name" value="Ser_HO-MeTrfase-like"/>
</dbReference>
<dbReference type="InterPro" id="IPR019798">
    <property type="entry name" value="Ser_HO-MeTrfase_PLP_BS"/>
</dbReference>
<dbReference type="InterPro" id="IPR039429">
    <property type="entry name" value="SHMT-like_dom"/>
</dbReference>
<dbReference type="NCBIfam" id="NF000586">
    <property type="entry name" value="PRK00011.1"/>
    <property type="match status" value="1"/>
</dbReference>
<dbReference type="PANTHER" id="PTHR11680">
    <property type="entry name" value="SERINE HYDROXYMETHYLTRANSFERASE"/>
    <property type="match status" value="1"/>
</dbReference>
<dbReference type="PANTHER" id="PTHR11680:SF50">
    <property type="entry name" value="SERINE HYDROXYMETHYLTRANSFERASE"/>
    <property type="match status" value="1"/>
</dbReference>
<dbReference type="Pfam" id="PF00464">
    <property type="entry name" value="SHMT"/>
    <property type="match status" value="1"/>
</dbReference>
<dbReference type="PIRSF" id="PIRSF000412">
    <property type="entry name" value="SHMT"/>
    <property type="match status" value="1"/>
</dbReference>
<dbReference type="SUPFAM" id="SSF53383">
    <property type="entry name" value="PLP-dependent transferases"/>
    <property type="match status" value="1"/>
</dbReference>
<dbReference type="PROSITE" id="PS00096">
    <property type="entry name" value="SHMT"/>
    <property type="match status" value="1"/>
</dbReference>